<keyword id="KW-0067">ATP-binding</keyword>
<keyword id="KW-0460">Magnesium</keyword>
<keyword id="KW-0547">Nucleotide-binding</keyword>
<keyword id="KW-1185">Reference proteome</keyword>
<keyword id="KW-0808">Transferase</keyword>
<keyword id="KW-0819">tRNA processing</keyword>
<sequence>MSSAPPAPRVIAVVGPTAAGKSDLGVFLAQRLGGEVVNADSMQLYRGMDIGTAKLTPEERGGVPHHLLDIWDVTVTASVAEYQRLARERIDALLAEGRWPILVGGSGLYVRGAVDNLEFPGTDPGIRARLEEELELRGPGALHARLAVADPEAARAILPSNGRRIVRALEVIEITGRPFTANLPGHDSVYDTVQIGVDVARPELHERIALRVDRMWEAGLVDEVRALEAQGLREGRTASRALGYQQVLAALAGECTLDEARAETVRATKRFARRQDSWFRRDPRVHWLSGGVADRTELPRLALSLVERPVTA</sequence>
<reference key="1">
    <citation type="journal article" date="2002" name="Nature">
        <title>Complete genome sequence of the model actinomycete Streptomyces coelicolor A3(2).</title>
        <authorList>
            <person name="Bentley S.D."/>
            <person name="Chater K.F."/>
            <person name="Cerdeno-Tarraga A.-M."/>
            <person name="Challis G.L."/>
            <person name="Thomson N.R."/>
            <person name="James K.D."/>
            <person name="Harris D.E."/>
            <person name="Quail M.A."/>
            <person name="Kieser H."/>
            <person name="Harper D."/>
            <person name="Bateman A."/>
            <person name="Brown S."/>
            <person name="Chandra G."/>
            <person name="Chen C.W."/>
            <person name="Collins M."/>
            <person name="Cronin A."/>
            <person name="Fraser A."/>
            <person name="Goble A."/>
            <person name="Hidalgo J."/>
            <person name="Hornsby T."/>
            <person name="Howarth S."/>
            <person name="Huang C.-H."/>
            <person name="Kieser T."/>
            <person name="Larke L."/>
            <person name="Murphy L.D."/>
            <person name="Oliver K."/>
            <person name="O'Neil S."/>
            <person name="Rabbinowitsch E."/>
            <person name="Rajandream M.A."/>
            <person name="Rutherford K.M."/>
            <person name="Rutter S."/>
            <person name="Seeger K."/>
            <person name="Saunders D."/>
            <person name="Sharp S."/>
            <person name="Squares R."/>
            <person name="Squares S."/>
            <person name="Taylor K."/>
            <person name="Warren T."/>
            <person name="Wietzorrek A."/>
            <person name="Woodward J.R."/>
            <person name="Barrell B.G."/>
            <person name="Parkhill J."/>
            <person name="Hopwood D.A."/>
        </authorList>
    </citation>
    <scope>NUCLEOTIDE SEQUENCE [LARGE SCALE GENOMIC DNA]</scope>
    <source>
        <strain>ATCC BAA-471 / A3(2) / M145</strain>
    </source>
</reference>
<dbReference type="EC" id="2.5.1.75" evidence="1"/>
<dbReference type="EMBL" id="AL939125">
    <property type="protein sequence ID" value="CAA18328.1"/>
    <property type="molecule type" value="Genomic_DNA"/>
</dbReference>
<dbReference type="PIR" id="T35111">
    <property type="entry name" value="T35111"/>
</dbReference>
<dbReference type="RefSeq" id="NP_629915.1">
    <property type="nucleotide sequence ID" value="NC_003888.3"/>
</dbReference>
<dbReference type="RefSeq" id="WP_011030456.1">
    <property type="nucleotide sequence ID" value="NZ_VNID01000007.1"/>
</dbReference>
<dbReference type="SMR" id="O69967"/>
<dbReference type="FunCoup" id="O69967">
    <property type="interactions" value="407"/>
</dbReference>
<dbReference type="STRING" id="100226.gene:17763451"/>
<dbReference type="PaxDb" id="100226-SCO5791"/>
<dbReference type="GeneID" id="91383261"/>
<dbReference type="KEGG" id="sco:SCO5791"/>
<dbReference type="PATRIC" id="fig|100226.15.peg.5881"/>
<dbReference type="eggNOG" id="COG0324">
    <property type="taxonomic scope" value="Bacteria"/>
</dbReference>
<dbReference type="HOGENOM" id="CLU_032616_0_1_11"/>
<dbReference type="InParanoid" id="O69967"/>
<dbReference type="OrthoDB" id="9776390at2"/>
<dbReference type="PhylomeDB" id="O69967"/>
<dbReference type="Proteomes" id="UP000001973">
    <property type="component" value="Chromosome"/>
</dbReference>
<dbReference type="GO" id="GO:0005524">
    <property type="term" value="F:ATP binding"/>
    <property type="evidence" value="ECO:0007669"/>
    <property type="project" value="UniProtKB-UniRule"/>
</dbReference>
<dbReference type="GO" id="GO:0052381">
    <property type="term" value="F:tRNA dimethylallyltransferase activity"/>
    <property type="evidence" value="ECO:0000318"/>
    <property type="project" value="GO_Central"/>
</dbReference>
<dbReference type="GO" id="GO:0006400">
    <property type="term" value="P:tRNA modification"/>
    <property type="evidence" value="ECO:0000318"/>
    <property type="project" value="GO_Central"/>
</dbReference>
<dbReference type="FunFam" id="1.10.20.140:FF:000001">
    <property type="entry name" value="tRNA dimethylallyltransferase"/>
    <property type="match status" value="1"/>
</dbReference>
<dbReference type="Gene3D" id="1.10.20.140">
    <property type="match status" value="1"/>
</dbReference>
<dbReference type="Gene3D" id="3.40.50.300">
    <property type="entry name" value="P-loop containing nucleotide triphosphate hydrolases"/>
    <property type="match status" value="1"/>
</dbReference>
<dbReference type="HAMAP" id="MF_00185">
    <property type="entry name" value="IPP_trans"/>
    <property type="match status" value="1"/>
</dbReference>
<dbReference type="InterPro" id="IPR039657">
    <property type="entry name" value="Dimethylallyltransferase"/>
</dbReference>
<dbReference type="InterPro" id="IPR018022">
    <property type="entry name" value="IPT"/>
</dbReference>
<dbReference type="InterPro" id="IPR027417">
    <property type="entry name" value="P-loop_NTPase"/>
</dbReference>
<dbReference type="NCBIfam" id="TIGR00174">
    <property type="entry name" value="miaA"/>
    <property type="match status" value="1"/>
</dbReference>
<dbReference type="PANTHER" id="PTHR11088">
    <property type="entry name" value="TRNA DIMETHYLALLYLTRANSFERASE"/>
    <property type="match status" value="1"/>
</dbReference>
<dbReference type="PANTHER" id="PTHR11088:SF60">
    <property type="entry name" value="TRNA DIMETHYLALLYLTRANSFERASE"/>
    <property type="match status" value="1"/>
</dbReference>
<dbReference type="Pfam" id="PF01715">
    <property type="entry name" value="IPPT"/>
    <property type="match status" value="1"/>
</dbReference>
<dbReference type="SUPFAM" id="SSF52540">
    <property type="entry name" value="P-loop containing nucleoside triphosphate hydrolases"/>
    <property type="match status" value="2"/>
</dbReference>
<comment type="function">
    <text evidence="1">Catalyzes the transfer of a dimethylallyl group onto the adenine at position 37 in tRNAs that read codons beginning with uridine, leading to the formation of N6-(dimethylallyl)adenosine (i(6)A).</text>
</comment>
<comment type="catalytic activity">
    <reaction evidence="1">
        <text>adenosine(37) in tRNA + dimethylallyl diphosphate = N(6)-dimethylallyladenosine(37) in tRNA + diphosphate</text>
        <dbReference type="Rhea" id="RHEA:26482"/>
        <dbReference type="Rhea" id="RHEA-COMP:10162"/>
        <dbReference type="Rhea" id="RHEA-COMP:10375"/>
        <dbReference type="ChEBI" id="CHEBI:33019"/>
        <dbReference type="ChEBI" id="CHEBI:57623"/>
        <dbReference type="ChEBI" id="CHEBI:74411"/>
        <dbReference type="ChEBI" id="CHEBI:74415"/>
        <dbReference type="EC" id="2.5.1.75"/>
    </reaction>
</comment>
<comment type="cofactor">
    <cofactor evidence="1">
        <name>Mg(2+)</name>
        <dbReference type="ChEBI" id="CHEBI:18420"/>
    </cofactor>
</comment>
<comment type="subunit">
    <text evidence="1">Monomer.</text>
</comment>
<comment type="similarity">
    <text evidence="1">Belongs to the IPP transferase family.</text>
</comment>
<proteinExistence type="inferred from homology"/>
<protein>
    <recommendedName>
        <fullName evidence="1">tRNA dimethylallyltransferase</fullName>
        <ecNumber evidence="1">2.5.1.75</ecNumber>
    </recommendedName>
    <alternativeName>
        <fullName evidence="1">Dimethylallyl diphosphate:tRNA dimethylallyltransferase</fullName>
        <shortName evidence="1">DMAPP:tRNA dimethylallyltransferase</shortName>
        <shortName evidence="1">DMATase</shortName>
    </alternativeName>
    <alternativeName>
        <fullName evidence="1">Isopentenyl-diphosphate:tRNA isopentenyltransferase</fullName>
        <shortName evidence="1">IPP transferase</shortName>
        <shortName evidence="1">IPPT</shortName>
        <shortName evidence="1">IPTase</shortName>
    </alternativeName>
</protein>
<name>MIAA_STRCO</name>
<organism>
    <name type="scientific">Streptomyces coelicolor (strain ATCC BAA-471 / A3(2) / M145)</name>
    <dbReference type="NCBI Taxonomy" id="100226"/>
    <lineage>
        <taxon>Bacteria</taxon>
        <taxon>Bacillati</taxon>
        <taxon>Actinomycetota</taxon>
        <taxon>Actinomycetes</taxon>
        <taxon>Kitasatosporales</taxon>
        <taxon>Streptomycetaceae</taxon>
        <taxon>Streptomyces</taxon>
        <taxon>Streptomyces albidoflavus group</taxon>
    </lineage>
</organism>
<accession>O69967</accession>
<gene>
    <name evidence="1" type="primary">miaA</name>
    <name type="ordered locus">SCO5791</name>
    <name type="ORF">SC4H2.12</name>
</gene>
<feature type="chain" id="PRO_0000163983" description="tRNA dimethylallyltransferase">
    <location>
        <begin position="1"/>
        <end position="312"/>
    </location>
</feature>
<feature type="region of interest" description="Interaction with substrate tRNA" evidence="1">
    <location>
        <begin position="40"/>
        <end position="43"/>
    </location>
</feature>
<feature type="binding site" evidence="1">
    <location>
        <begin position="15"/>
        <end position="22"/>
    </location>
    <ligand>
        <name>ATP</name>
        <dbReference type="ChEBI" id="CHEBI:30616"/>
    </ligand>
</feature>
<feature type="binding site" evidence="1">
    <location>
        <begin position="17"/>
        <end position="22"/>
    </location>
    <ligand>
        <name>substrate</name>
    </ligand>
</feature>
<feature type="site" description="Interaction with substrate tRNA" evidence="1">
    <location>
        <position position="106"/>
    </location>
</feature>
<feature type="site" description="Interaction with substrate tRNA" evidence="1">
    <location>
        <position position="127"/>
    </location>
</feature>
<evidence type="ECO:0000255" key="1">
    <source>
        <dbReference type="HAMAP-Rule" id="MF_00185"/>
    </source>
</evidence>